<comment type="function">
    <text evidence="1">One of the primary rRNA binding proteins, it binds directly to 16S rRNA where it helps nucleate assembly of the platform of the 30S subunit by binding and bridging several RNA helices of the 16S rRNA.</text>
</comment>
<comment type="function">
    <text evidence="1">Forms an intersubunit bridge (bridge B4) with the 23S rRNA of the 50S subunit in the ribosome.</text>
</comment>
<comment type="subunit">
    <text evidence="1">Part of the 30S ribosomal subunit. Forms a bridge to the 50S subunit in the 70S ribosome, contacting the 23S rRNA.</text>
</comment>
<comment type="similarity">
    <text evidence="1">Belongs to the universal ribosomal protein uS15 family.</text>
</comment>
<reference key="1">
    <citation type="submission" date="2008-02" db="EMBL/GenBank/DDBJ databases">
        <title>Complete sequence of Pseudomonas putida W619.</title>
        <authorList>
            <person name="Copeland A."/>
            <person name="Lucas S."/>
            <person name="Lapidus A."/>
            <person name="Barry K."/>
            <person name="Detter J.C."/>
            <person name="Glavina del Rio T."/>
            <person name="Dalin E."/>
            <person name="Tice H."/>
            <person name="Pitluck S."/>
            <person name="Chain P."/>
            <person name="Malfatti S."/>
            <person name="Shin M."/>
            <person name="Vergez L."/>
            <person name="Schmutz J."/>
            <person name="Larimer F."/>
            <person name="Land M."/>
            <person name="Hauser L."/>
            <person name="Kyrpides N."/>
            <person name="Kim E."/>
            <person name="Taghavi S."/>
            <person name="Vangronsveld D."/>
            <person name="van der Lelie D."/>
            <person name="Richardson P."/>
        </authorList>
    </citation>
    <scope>NUCLEOTIDE SEQUENCE [LARGE SCALE GENOMIC DNA]</scope>
    <source>
        <strain>W619</strain>
    </source>
</reference>
<gene>
    <name evidence="1" type="primary">rpsO</name>
    <name type="ordered locus">PputW619_0724</name>
</gene>
<feature type="chain" id="PRO_1000143156" description="Small ribosomal subunit protein uS15">
    <location>
        <begin position="1"/>
        <end position="89"/>
    </location>
</feature>
<evidence type="ECO:0000255" key="1">
    <source>
        <dbReference type="HAMAP-Rule" id="MF_01343"/>
    </source>
</evidence>
<evidence type="ECO:0000305" key="2"/>
<accession>B1J2B2</accession>
<organism>
    <name type="scientific">Pseudomonas putida (strain W619)</name>
    <dbReference type="NCBI Taxonomy" id="390235"/>
    <lineage>
        <taxon>Bacteria</taxon>
        <taxon>Pseudomonadati</taxon>
        <taxon>Pseudomonadota</taxon>
        <taxon>Gammaproteobacteria</taxon>
        <taxon>Pseudomonadales</taxon>
        <taxon>Pseudomonadaceae</taxon>
        <taxon>Pseudomonas</taxon>
    </lineage>
</organism>
<keyword id="KW-0687">Ribonucleoprotein</keyword>
<keyword id="KW-0689">Ribosomal protein</keyword>
<keyword id="KW-0694">RNA-binding</keyword>
<keyword id="KW-0699">rRNA-binding</keyword>
<dbReference type="EMBL" id="CP000949">
    <property type="protein sequence ID" value="ACA71229.1"/>
    <property type="molecule type" value="Genomic_DNA"/>
</dbReference>
<dbReference type="SMR" id="B1J2B2"/>
<dbReference type="STRING" id="390235.PputW619_0724"/>
<dbReference type="KEGG" id="ppw:PputW619_0724"/>
<dbReference type="eggNOG" id="COG0184">
    <property type="taxonomic scope" value="Bacteria"/>
</dbReference>
<dbReference type="HOGENOM" id="CLU_148518_0_0_6"/>
<dbReference type="OrthoDB" id="9799262at2"/>
<dbReference type="GO" id="GO:0022627">
    <property type="term" value="C:cytosolic small ribosomal subunit"/>
    <property type="evidence" value="ECO:0007669"/>
    <property type="project" value="TreeGrafter"/>
</dbReference>
<dbReference type="GO" id="GO:0019843">
    <property type="term" value="F:rRNA binding"/>
    <property type="evidence" value="ECO:0007669"/>
    <property type="project" value="UniProtKB-UniRule"/>
</dbReference>
<dbReference type="GO" id="GO:0003735">
    <property type="term" value="F:structural constituent of ribosome"/>
    <property type="evidence" value="ECO:0007669"/>
    <property type="project" value="InterPro"/>
</dbReference>
<dbReference type="GO" id="GO:0006412">
    <property type="term" value="P:translation"/>
    <property type="evidence" value="ECO:0007669"/>
    <property type="project" value="UniProtKB-UniRule"/>
</dbReference>
<dbReference type="CDD" id="cd00353">
    <property type="entry name" value="Ribosomal_S15p_S13e"/>
    <property type="match status" value="1"/>
</dbReference>
<dbReference type="FunFam" id="1.10.287.10:FF:000002">
    <property type="entry name" value="30S ribosomal protein S15"/>
    <property type="match status" value="1"/>
</dbReference>
<dbReference type="Gene3D" id="6.10.250.3130">
    <property type="match status" value="1"/>
</dbReference>
<dbReference type="Gene3D" id="1.10.287.10">
    <property type="entry name" value="S15/NS1, RNA-binding"/>
    <property type="match status" value="1"/>
</dbReference>
<dbReference type="HAMAP" id="MF_01343_B">
    <property type="entry name" value="Ribosomal_uS15_B"/>
    <property type="match status" value="1"/>
</dbReference>
<dbReference type="InterPro" id="IPR000589">
    <property type="entry name" value="Ribosomal_uS15"/>
</dbReference>
<dbReference type="InterPro" id="IPR005290">
    <property type="entry name" value="Ribosomal_uS15_bac-type"/>
</dbReference>
<dbReference type="InterPro" id="IPR009068">
    <property type="entry name" value="uS15_NS1_RNA-bd_sf"/>
</dbReference>
<dbReference type="NCBIfam" id="TIGR00952">
    <property type="entry name" value="S15_bact"/>
    <property type="match status" value="1"/>
</dbReference>
<dbReference type="PANTHER" id="PTHR23321">
    <property type="entry name" value="RIBOSOMAL PROTEIN S15, BACTERIAL AND ORGANELLAR"/>
    <property type="match status" value="1"/>
</dbReference>
<dbReference type="PANTHER" id="PTHR23321:SF26">
    <property type="entry name" value="SMALL RIBOSOMAL SUBUNIT PROTEIN US15M"/>
    <property type="match status" value="1"/>
</dbReference>
<dbReference type="Pfam" id="PF00312">
    <property type="entry name" value="Ribosomal_S15"/>
    <property type="match status" value="1"/>
</dbReference>
<dbReference type="SMART" id="SM01387">
    <property type="entry name" value="Ribosomal_S15"/>
    <property type="match status" value="1"/>
</dbReference>
<dbReference type="SUPFAM" id="SSF47060">
    <property type="entry name" value="S15/NS1 RNA-binding domain"/>
    <property type="match status" value="1"/>
</dbReference>
<dbReference type="PROSITE" id="PS00362">
    <property type="entry name" value="RIBOSOMAL_S15"/>
    <property type="match status" value="1"/>
</dbReference>
<proteinExistence type="inferred from homology"/>
<sequence length="89" mass="9972">MALSVEEKAQIVTDFQQAAGDTGSPEVQVALLTANINKLQGHFKANGKDHHSRRGLIRMVNQRRKLLDYLKGKDTTRYSALIGRLGLRR</sequence>
<protein>
    <recommendedName>
        <fullName evidence="1">Small ribosomal subunit protein uS15</fullName>
    </recommendedName>
    <alternativeName>
        <fullName evidence="2">30S ribosomal protein S15</fullName>
    </alternativeName>
</protein>
<name>RS15_PSEPW</name>